<sequence>MKLMICTSNKKKFEEISSILESLKKDENLDLEFVKPPKEIEVEEYANTFLSNAYLKAKAYYNAFGIPALADDSGLVVEAFSDNLERPGVYSARFYKDSFGSHVLKEEDFKLSKDELNNLKVLRLLEKEENRKAKFVSVVAIVLSNNYGIFGEGELKGHIAKEPFGNFGFGYDPIFIPEGYNTTLANIENKDKISHRRQALEAVFFMLKKML</sequence>
<organism>
    <name type="scientific">Hydrogenobaculum sp. (strain Y04AAS1)</name>
    <dbReference type="NCBI Taxonomy" id="380749"/>
    <lineage>
        <taxon>Bacteria</taxon>
        <taxon>Pseudomonadati</taxon>
        <taxon>Aquificota</taxon>
        <taxon>Aquificia</taxon>
        <taxon>Aquificales</taxon>
        <taxon>Aquificaceae</taxon>
        <taxon>Hydrogenobaculum</taxon>
    </lineage>
</organism>
<dbReference type="EC" id="3.6.1.66" evidence="1"/>
<dbReference type="EMBL" id="CP001130">
    <property type="protein sequence ID" value="ACG57530.1"/>
    <property type="molecule type" value="Genomic_DNA"/>
</dbReference>
<dbReference type="RefSeq" id="WP_012513886.1">
    <property type="nucleotide sequence ID" value="NC_011126.1"/>
</dbReference>
<dbReference type="SMR" id="B4U8R9"/>
<dbReference type="STRING" id="380749.HY04AAS1_0843"/>
<dbReference type="KEGG" id="hya:HY04AAS1_0843"/>
<dbReference type="eggNOG" id="COG0127">
    <property type="taxonomic scope" value="Bacteria"/>
</dbReference>
<dbReference type="HOGENOM" id="CLU_082080_0_2_0"/>
<dbReference type="OrthoDB" id="9807456at2"/>
<dbReference type="GO" id="GO:0005829">
    <property type="term" value="C:cytosol"/>
    <property type="evidence" value="ECO:0007669"/>
    <property type="project" value="TreeGrafter"/>
</dbReference>
<dbReference type="GO" id="GO:0035870">
    <property type="term" value="F:dITP diphosphatase activity"/>
    <property type="evidence" value="ECO:0007669"/>
    <property type="project" value="RHEA"/>
</dbReference>
<dbReference type="GO" id="GO:0036220">
    <property type="term" value="F:ITP diphosphatase activity"/>
    <property type="evidence" value="ECO:0007669"/>
    <property type="project" value="UniProtKB-EC"/>
</dbReference>
<dbReference type="GO" id="GO:0046872">
    <property type="term" value="F:metal ion binding"/>
    <property type="evidence" value="ECO:0007669"/>
    <property type="project" value="UniProtKB-KW"/>
</dbReference>
<dbReference type="GO" id="GO:0000166">
    <property type="term" value="F:nucleotide binding"/>
    <property type="evidence" value="ECO:0007669"/>
    <property type="project" value="UniProtKB-KW"/>
</dbReference>
<dbReference type="GO" id="GO:0017111">
    <property type="term" value="F:ribonucleoside triphosphate phosphatase activity"/>
    <property type="evidence" value="ECO:0007669"/>
    <property type="project" value="InterPro"/>
</dbReference>
<dbReference type="GO" id="GO:0036222">
    <property type="term" value="F:XTP diphosphatase activity"/>
    <property type="evidence" value="ECO:0007669"/>
    <property type="project" value="RHEA"/>
</dbReference>
<dbReference type="GO" id="GO:0009117">
    <property type="term" value="P:nucleotide metabolic process"/>
    <property type="evidence" value="ECO:0007669"/>
    <property type="project" value="UniProtKB-KW"/>
</dbReference>
<dbReference type="GO" id="GO:0009146">
    <property type="term" value="P:purine nucleoside triphosphate catabolic process"/>
    <property type="evidence" value="ECO:0007669"/>
    <property type="project" value="UniProtKB-UniRule"/>
</dbReference>
<dbReference type="CDD" id="cd00515">
    <property type="entry name" value="HAM1"/>
    <property type="match status" value="1"/>
</dbReference>
<dbReference type="FunFam" id="3.90.950.10:FF:000001">
    <property type="entry name" value="dITP/XTP pyrophosphatase"/>
    <property type="match status" value="1"/>
</dbReference>
<dbReference type="Gene3D" id="3.90.950.10">
    <property type="match status" value="1"/>
</dbReference>
<dbReference type="HAMAP" id="MF_01405">
    <property type="entry name" value="Non_canon_purine_NTPase"/>
    <property type="match status" value="1"/>
</dbReference>
<dbReference type="InterPro" id="IPR020922">
    <property type="entry name" value="dITP/XTP_pyrophosphatase"/>
</dbReference>
<dbReference type="InterPro" id="IPR029001">
    <property type="entry name" value="ITPase-like_fam"/>
</dbReference>
<dbReference type="InterPro" id="IPR002637">
    <property type="entry name" value="RdgB/HAM1"/>
</dbReference>
<dbReference type="NCBIfam" id="TIGR00042">
    <property type="entry name" value="RdgB/HAM1 family non-canonical purine NTP pyrophosphatase"/>
    <property type="match status" value="1"/>
</dbReference>
<dbReference type="PANTHER" id="PTHR11067:SF9">
    <property type="entry name" value="INOSINE TRIPHOSPHATE PYROPHOSPHATASE"/>
    <property type="match status" value="1"/>
</dbReference>
<dbReference type="PANTHER" id="PTHR11067">
    <property type="entry name" value="INOSINE TRIPHOSPHATE PYROPHOSPHATASE/HAM1 PROTEIN"/>
    <property type="match status" value="1"/>
</dbReference>
<dbReference type="Pfam" id="PF01725">
    <property type="entry name" value="Ham1p_like"/>
    <property type="match status" value="1"/>
</dbReference>
<dbReference type="SUPFAM" id="SSF52972">
    <property type="entry name" value="ITPase-like"/>
    <property type="match status" value="1"/>
</dbReference>
<proteinExistence type="inferred from homology"/>
<evidence type="ECO:0000255" key="1">
    <source>
        <dbReference type="HAMAP-Rule" id="MF_01405"/>
    </source>
</evidence>
<name>IXTPA_HYDS0</name>
<comment type="function">
    <text evidence="1">Pyrophosphatase that catalyzes the hydrolysis of nucleoside triphosphates to their monophosphate derivatives, with a high preference for the non-canonical purine nucleotides XTP (xanthosine triphosphate), dITP (deoxyinosine triphosphate) and ITP. Seems to function as a house-cleaning enzyme that removes non-canonical purine nucleotides from the nucleotide pool, thus preventing their incorporation into DNA/RNA and avoiding chromosomal lesions.</text>
</comment>
<comment type="catalytic activity">
    <reaction evidence="1">
        <text>XTP + H2O = XMP + diphosphate + H(+)</text>
        <dbReference type="Rhea" id="RHEA:28610"/>
        <dbReference type="ChEBI" id="CHEBI:15377"/>
        <dbReference type="ChEBI" id="CHEBI:15378"/>
        <dbReference type="ChEBI" id="CHEBI:33019"/>
        <dbReference type="ChEBI" id="CHEBI:57464"/>
        <dbReference type="ChEBI" id="CHEBI:61314"/>
        <dbReference type="EC" id="3.6.1.66"/>
    </reaction>
</comment>
<comment type="catalytic activity">
    <reaction evidence="1">
        <text>dITP + H2O = dIMP + diphosphate + H(+)</text>
        <dbReference type="Rhea" id="RHEA:28342"/>
        <dbReference type="ChEBI" id="CHEBI:15377"/>
        <dbReference type="ChEBI" id="CHEBI:15378"/>
        <dbReference type="ChEBI" id="CHEBI:33019"/>
        <dbReference type="ChEBI" id="CHEBI:61194"/>
        <dbReference type="ChEBI" id="CHEBI:61382"/>
        <dbReference type="EC" id="3.6.1.66"/>
    </reaction>
</comment>
<comment type="catalytic activity">
    <reaction evidence="1">
        <text>ITP + H2O = IMP + diphosphate + H(+)</text>
        <dbReference type="Rhea" id="RHEA:29399"/>
        <dbReference type="ChEBI" id="CHEBI:15377"/>
        <dbReference type="ChEBI" id="CHEBI:15378"/>
        <dbReference type="ChEBI" id="CHEBI:33019"/>
        <dbReference type="ChEBI" id="CHEBI:58053"/>
        <dbReference type="ChEBI" id="CHEBI:61402"/>
        <dbReference type="EC" id="3.6.1.66"/>
    </reaction>
</comment>
<comment type="cofactor">
    <cofactor evidence="1">
        <name>Mg(2+)</name>
        <dbReference type="ChEBI" id="CHEBI:18420"/>
    </cofactor>
    <text evidence="1">Binds 1 Mg(2+) ion per subunit.</text>
</comment>
<comment type="subunit">
    <text evidence="1">Homodimer.</text>
</comment>
<comment type="similarity">
    <text evidence="1">Belongs to the HAM1 NTPase family.</text>
</comment>
<accession>B4U8R9</accession>
<protein>
    <recommendedName>
        <fullName evidence="1">dITP/XTP pyrophosphatase</fullName>
        <ecNumber evidence="1">3.6.1.66</ecNumber>
    </recommendedName>
    <alternativeName>
        <fullName evidence="1">Non-canonical purine NTP pyrophosphatase</fullName>
    </alternativeName>
    <alternativeName>
        <fullName evidence="1">Non-standard purine NTP pyrophosphatase</fullName>
    </alternativeName>
    <alternativeName>
        <fullName evidence="1">Nucleoside-triphosphate diphosphatase</fullName>
    </alternativeName>
    <alternativeName>
        <fullName evidence="1">Nucleoside-triphosphate pyrophosphatase</fullName>
        <shortName evidence="1">NTPase</shortName>
    </alternativeName>
</protein>
<reference key="1">
    <citation type="journal article" date="2009" name="J. Bacteriol.">
        <title>Complete and draft genome sequences of six members of the Aquificales.</title>
        <authorList>
            <person name="Reysenbach A.-L."/>
            <person name="Hamamura N."/>
            <person name="Podar M."/>
            <person name="Griffiths E."/>
            <person name="Ferreira S."/>
            <person name="Hochstein R."/>
            <person name="Heidelberg J."/>
            <person name="Johnson J."/>
            <person name="Mead D."/>
            <person name="Pohorille A."/>
            <person name="Sarmiento M."/>
            <person name="Schweighofer K."/>
            <person name="Seshadri R."/>
            <person name="Voytek M.A."/>
        </authorList>
    </citation>
    <scope>NUCLEOTIDE SEQUENCE [LARGE SCALE GENOMIC DNA]</scope>
    <source>
        <strain>Y04AAS1</strain>
    </source>
</reference>
<keyword id="KW-0378">Hydrolase</keyword>
<keyword id="KW-0460">Magnesium</keyword>
<keyword id="KW-0479">Metal-binding</keyword>
<keyword id="KW-0546">Nucleotide metabolism</keyword>
<keyword id="KW-0547">Nucleotide-binding</keyword>
<gene>
    <name type="ordered locus">HY04AAS1_0843</name>
</gene>
<feature type="chain" id="PRO_1000145491" description="dITP/XTP pyrophosphatase">
    <location>
        <begin position="1"/>
        <end position="211"/>
    </location>
</feature>
<feature type="active site" description="Proton acceptor" evidence="1">
    <location>
        <position position="72"/>
    </location>
</feature>
<feature type="binding site" evidence="1">
    <location>
        <begin position="7"/>
        <end position="12"/>
    </location>
    <ligand>
        <name>substrate</name>
    </ligand>
</feature>
<feature type="binding site" evidence="1">
    <location>
        <position position="43"/>
    </location>
    <ligand>
        <name>Mg(2+)</name>
        <dbReference type="ChEBI" id="CHEBI:18420"/>
    </ligand>
</feature>
<feature type="binding site" evidence="1">
    <location>
        <position position="72"/>
    </location>
    <ligand>
        <name>Mg(2+)</name>
        <dbReference type="ChEBI" id="CHEBI:18420"/>
    </ligand>
</feature>
<feature type="binding site" evidence="1">
    <location>
        <position position="73"/>
    </location>
    <ligand>
        <name>substrate</name>
    </ligand>
</feature>
<feature type="binding site" evidence="1">
    <location>
        <begin position="169"/>
        <end position="172"/>
    </location>
    <ligand>
        <name>substrate</name>
    </ligand>
</feature>
<feature type="binding site" evidence="1">
    <location>
        <position position="190"/>
    </location>
    <ligand>
        <name>substrate</name>
    </ligand>
</feature>
<feature type="binding site" evidence="1">
    <location>
        <begin position="195"/>
        <end position="196"/>
    </location>
    <ligand>
        <name>substrate</name>
    </ligand>
</feature>